<name>GLMU_CLOBL</name>
<proteinExistence type="inferred from homology"/>
<dbReference type="EC" id="2.7.7.23" evidence="1"/>
<dbReference type="EC" id="2.3.1.157" evidence="1"/>
<dbReference type="EMBL" id="CP000728">
    <property type="protein sequence ID" value="ABS39612.1"/>
    <property type="molecule type" value="Genomic_DNA"/>
</dbReference>
<dbReference type="RefSeq" id="WP_012101164.1">
    <property type="nucleotide sequence ID" value="NC_009699.1"/>
</dbReference>
<dbReference type="SMR" id="A7GJD9"/>
<dbReference type="KEGG" id="cbf:CLI_3765"/>
<dbReference type="HOGENOM" id="CLU_029499_15_2_9"/>
<dbReference type="UniPathway" id="UPA00113">
    <property type="reaction ID" value="UER00532"/>
</dbReference>
<dbReference type="UniPathway" id="UPA00113">
    <property type="reaction ID" value="UER00533"/>
</dbReference>
<dbReference type="UniPathway" id="UPA00973"/>
<dbReference type="Proteomes" id="UP000002410">
    <property type="component" value="Chromosome"/>
</dbReference>
<dbReference type="GO" id="GO:0005737">
    <property type="term" value="C:cytoplasm"/>
    <property type="evidence" value="ECO:0007669"/>
    <property type="project" value="UniProtKB-SubCell"/>
</dbReference>
<dbReference type="GO" id="GO:0016020">
    <property type="term" value="C:membrane"/>
    <property type="evidence" value="ECO:0007669"/>
    <property type="project" value="GOC"/>
</dbReference>
<dbReference type="GO" id="GO:0019134">
    <property type="term" value="F:glucosamine-1-phosphate N-acetyltransferase activity"/>
    <property type="evidence" value="ECO:0007669"/>
    <property type="project" value="UniProtKB-UniRule"/>
</dbReference>
<dbReference type="GO" id="GO:0000287">
    <property type="term" value="F:magnesium ion binding"/>
    <property type="evidence" value="ECO:0007669"/>
    <property type="project" value="UniProtKB-UniRule"/>
</dbReference>
<dbReference type="GO" id="GO:0003977">
    <property type="term" value="F:UDP-N-acetylglucosamine diphosphorylase activity"/>
    <property type="evidence" value="ECO:0007669"/>
    <property type="project" value="UniProtKB-UniRule"/>
</dbReference>
<dbReference type="GO" id="GO:0000902">
    <property type="term" value="P:cell morphogenesis"/>
    <property type="evidence" value="ECO:0007669"/>
    <property type="project" value="UniProtKB-UniRule"/>
</dbReference>
<dbReference type="GO" id="GO:0071555">
    <property type="term" value="P:cell wall organization"/>
    <property type="evidence" value="ECO:0007669"/>
    <property type="project" value="UniProtKB-KW"/>
</dbReference>
<dbReference type="GO" id="GO:0009245">
    <property type="term" value="P:lipid A biosynthetic process"/>
    <property type="evidence" value="ECO:0007669"/>
    <property type="project" value="UniProtKB-UniRule"/>
</dbReference>
<dbReference type="GO" id="GO:0009252">
    <property type="term" value="P:peptidoglycan biosynthetic process"/>
    <property type="evidence" value="ECO:0007669"/>
    <property type="project" value="UniProtKB-UniRule"/>
</dbReference>
<dbReference type="GO" id="GO:0008360">
    <property type="term" value="P:regulation of cell shape"/>
    <property type="evidence" value="ECO:0007669"/>
    <property type="project" value="UniProtKB-KW"/>
</dbReference>
<dbReference type="GO" id="GO:0006048">
    <property type="term" value="P:UDP-N-acetylglucosamine biosynthetic process"/>
    <property type="evidence" value="ECO:0007669"/>
    <property type="project" value="UniProtKB-UniPathway"/>
</dbReference>
<dbReference type="CDD" id="cd02540">
    <property type="entry name" value="GT2_GlmU_N_bac"/>
    <property type="match status" value="1"/>
</dbReference>
<dbReference type="CDD" id="cd03353">
    <property type="entry name" value="LbH_GlmU_C"/>
    <property type="match status" value="1"/>
</dbReference>
<dbReference type="Gene3D" id="2.160.10.10">
    <property type="entry name" value="Hexapeptide repeat proteins"/>
    <property type="match status" value="1"/>
</dbReference>
<dbReference type="Gene3D" id="3.90.550.10">
    <property type="entry name" value="Spore Coat Polysaccharide Biosynthesis Protein SpsA, Chain A"/>
    <property type="match status" value="1"/>
</dbReference>
<dbReference type="HAMAP" id="MF_01631">
    <property type="entry name" value="GlmU"/>
    <property type="match status" value="1"/>
</dbReference>
<dbReference type="InterPro" id="IPR005882">
    <property type="entry name" value="Bifunctional_GlmU"/>
</dbReference>
<dbReference type="InterPro" id="IPR050065">
    <property type="entry name" value="GlmU-like"/>
</dbReference>
<dbReference type="InterPro" id="IPR038009">
    <property type="entry name" value="GlmU_C_LbH"/>
</dbReference>
<dbReference type="InterPro" id="IPR001451">
    <property type="entry name" value="Hexapep"/>
</dbReference>
<dbReference type="InterPro" id="IPR005835">
    <property type="entry name" value="NTP_transferase_dom"/>
</dbReference>
<dbReference type="InterPro" id="IPR029044">
    <property type="entry name" value="Nucleotide-diphossugar_trans"/>
</dbReference>
<dbReference type="InterPro" id="IPR011004">
    <property type="entry name" value="Trimer_LpxA-like_sf"/>
</dbReference>
<dbReference type="NCBIfam" id="TIGR01173">
    <property type="entry name" value="glmU"/>
    <property type="match status" value="1"/>
</dbReference>
<dbReference type="NCBIfam" id="NF010934">
    <property type="entry name" value="PRK14354.1"/>
    <property type="match status" value="1"/>
</dbReference>
<dbReference type="PANTHER" id="PTHR43584:SF3">
    <property type="entry name" value="BIFUNCTIONAL PROTEIN GLMU"/>
    <property type="match status" value="1"/>
</dbReference>
<dbReference type="PANTHER" id="PTHR43584">
    <property type="entry name" value="NUCLEOTIDYL TRANSFERASE"/>
    <property type="match status" value="1"/>
</dbReference>
<dbReference type="Pfam" id="PF00132">
    <property type="entry name" value="Hexapep"/>
    <property type="match status" value="3"/>
</dbReference>
<dbReference type="Pfam" id="PF00483">
    <property type="entry name" value="NTP_transferase"/>
    <property type="match status" value="1"/>
</dbReference>
<dbReference type="SUPFAM" id="SSF53448">
    <property type="entry name" value="Nucleotide-diphospho-sugar transferases"/>
    <property type="match status" value="1"/>
</dbReference>
<dbReference type="SUPFAM" id="SSF51161">
    <property type="entry name" value="Trimeric LpxA-like enzymes"/>
    <property type="match status" value="1"/>
</dbReference>
<keyword id="KW-0012">Acyltransferase</keyword>
<keyword id="KW-0133">Cell shape</keyword>
<keyword id="KW-0961">Cell wall biogenesis/degradation</keyword>
<keyword id="KW-0963">Cytoplasm</keyword>
<keyword id="KW-0460">Magnesium</keyword>
<keyword id="KW-0479">Metal-binding</keyword>
<keyword id="KW-0511">Multifunctional enzyme</keyword>
<keyword id="KW-0548">Nucleotidyltransferase</keyword>
<keyword id="KW-0573">Peptidoglycan synthesis</keyword>
<keyword id="KW-0677">Repeat</keyword>
<keyword id="KW-0808">Transferase</keyword>
<organism>
    <name type="scientific">Clostridium botulinum (strain Langeland / NCTC 10281 / Type F)</name>
    <dbReference type="NCBI Taxonomy" id="441772"/>
    <lineage>
        <taxon>Bacteria</taxon>
        <taxon>Bacillati</taxon>
        <taxon>Bacillota</taxon>
        <taxon>Clostridia</taxon>
        <taxon>Eubacteriales</taxon>
        <taxon>Clostridiaceae</taxon>
        <taxon>Clostridium</taxon>
    </lineage>
</organism>
<reference key="1">
    <citation type="submission" date="2007-06" db="EMBL/GenBank/DDBJ databases">
        <authorList>
            <person name="Brinkac L.M."/>
            <person name="Daugherty S."/>
            <person name="Dodson R.J."/>
            <person name="Madupu R."/>
            <person name="Brown J.L."/>
            <person name="Bruce D."/>
            <person name="Detter C."/>
            <person name="Munk C."/>
            <person name="Smith L.A."/>
            <person name="Smith T.J."/>
            <person name="White O."/>
            <person name="Brettin T.S."/>
        </authorList>
    </citation>
    <scope>NUCLEOTIDE SEQUENCE [LARGE SCALE GENOMIC DNA]</scope>
    <source>
        <strain>Langeland / NCTC 10281 / Type F</strain>
    </source>
</reference>
<sequence>MYNCAIILAAGKGKRMKSSMPKVVHKVCGKEMVNHVIDNVRKANIKDVNLVIGKGSETVKEHTKDRNVTYSMQEEQLGTGHAVICAEEFLKDKKGTVAIFTGDAPLITNETIQQLFEFHNSGKYAATLISSTVQDPTGYGRIIREASGEVKKIVEHKDCNEEELKVNEINSGMYCFDIEVLLNSLKNLNNDNSQGEYYLTDVIEITKKSGDKVGAIVVPYEEIMGVNSRVQLSEAEIVMRKRINHKHMVNGVTFIDCESTYIDVDVEIGNDTIIYPGCVIQGNTTIKEGCTLYSNSRICNSVIGSGVIVENSVILESHVGEGTTVGPFAYIRPETKIGKSARIGDFVEIKKSTIGDNTKVSHLTYIGDAEVGSKCNFGCGTVVVNYDGQRKQKTIIGNNAFIGCNTNLISPVKVNDNTYIAAGSTITNEVPEGSLAIARSKQINKEGWLDKKGLLKK</sequence>
<accession>A7GJD9</accession>
<evidence type="ECO:0000255" key="1">
    <source>
        <dbReference type="HAMAP-Rule" id="MF_01631"/>
    </source>
</evidence>
<comment type="function">
    <text evidence="1">Catalyzes the last two sequential reactions in the de novo biosynthetic pathway for UDP-N-acetylglucosamine (UDP-GlcNAc). The C-terminal domain catalyzes the transfer of acetyl group from acetyl coenzyme A to glucosamine-1-phosphate (GlcN-1-P) to produce N-acetylglucosamine-1-phosphate (GlcNAc-1-P), which is converted into UDP-GlcNAc by the transfer of uridine 5-monophosphate (from uridine 5-triphosphate), a reaction catalyzed by the N-terminal domain.</text>
</comment>
<comment type="catalytic activity">
    <reaction evidence="1">
        <text>alpha-D-glucosamine 1-phosphate + acetyl-CoA = N-acetyl-alpha-D-glucosamine 1-phosphate + CoA + H(+)</text>
        <dbReference type="Rhea" id="RHEA:13725"/>
        <dbReference type="ChEBI" id="CHEBI:15378"/>
        <dbReference type="ChEBI" id="CHEBI:57287"/>
        <dbReference type="ChEBI" id="CHEBI:57288"/>
        <dbReference type="ChEBI" id="CHEBI:57776"/>
        <dbReference type="ChEBI" id="CHEBI:58516"/>
        <dbReference type="EC" id="2.3.1.157"/>
    </reaction>
</comment>
<comment type="catalytic activity">
    <reaction evidence="1">
        <text>N-acetyl-alpha-D-glucosamine 1-phosphate + UTP + H(+) = UDP-N-acetyl-alpha-D-glucosamine + diphosphate</text>
        <dbReference type="Rhea" id="RHEA:13509"/>
        <dbReference type="ChEBI" id="CHEBI:15378"/>
        <dbReference type="ChEBI" id="CHEBI:33019"/>
        <dbReference type="ChEBI" id="CHEBI:46398"/>
        <dbReference type="ChEBI" id="CHEBI:57705"/>
        <dbReference type="ChEBI" id="CHEBI:57776"/>
        <dbReference type="EC" id="2.7.7.23"/>
    </reaction>
</comment>
<comment type="cofactor">
    <cofactor evidence="1">
        <name>Mg(2+)</name>
        <dbReference type="ChEBI" id="CHEBI:18420"/>
    </cofactor>
    <text evidence="1">Binds 1 Mg(2+) ion per subunit.</text>
</comment>
<comment type="pathway">
    <text evidence="1">Nucleotide-sugar biosynthesis; UDP-N-acetyl-alpha-D-glucosamine biosynthesis; N-acetyl-alpha-D-glucosamine 1-phosphate from alpha-D-glucosamine 6-phosphate (route II): step 2/2.</text>
</comment>
<comment type="pathway">
    <text evidence="1">Nucleotide-sugar biosynthesis; UDP-N-acetyl-alpha-D-glucosamine biosynthesis; UDP-N-acetyl-alpha-D-glucosamine from N-acetyl-alpha-D-glucosamine 1-phosphate: step 1/1.</text>
</comment>
<comment type="pathway">
    <text evidence="1">Bacterial outer membrane biogenesis; LPS lipid A biosynthesis.</text>
</comment>
<comment type="subunit">
    <text evidence="1">Homotrimer.</text>
</comment>
<comment type="subcellular location">
    <subcellularLocation>
        <location evidence="1">Cytoplasm</location>
    </subcellularLocation>
</comment>
<comment type="similarity">
    <text evidence="1">In the N-terminal section; belongs to the N-acetylglucosamine-1-phosphate uridyltransferase family.</text>
</comment>
<comment type="similarity">
    <text evidence="1">In the C-terminal section; belongs to the transferase hexapeptide repeat family.</text>
</comment>
<feature type="chain" id="PRO_1000056152" description="Bifunctional protein GlmU">
    <location>
        <begin position="1"/>
        <end position="457"/>
    </location>
</feature>
<feature type="region of interest" description="Pyrophosphorylase" evidence="1">
    <location>
        <begin position="1"/>
        <end position="229"/>
    </location>
</feature>
<feature type="region of interest" description="Linker" evidence="1">
    <location>
        <begin position="230"/>
        <end position="250"/>
    </location>
</feature>
<feature type="region of interest" description="N-acetyltransferase" evidence="1">
    <location>
        <begin position="251"/>
        <end position="457"/>
    </location>
</feature>
<feature type="active site" description="Proton acceptor" evidence="1">
    <location>
        <position position="362"/>
    </location>
</feature>
<feature type="binding site" evidence="1">
    <location>
        <begin position="8"/>
        <end position="11"/>
    </location>
    <ligand>
        <name>UDP-N-acetyl-alpha-D-glucosamine</name>
        <dbReference type="ChEBI" id="CHEBI:57705"/>
    </ligand>
</feature>
<feature type="binding site" evidence="1">
    <location>
        <position position="22"/>
    </location>
    <ligand>
        <name>UDP-N-acetyl-alpha-D-glucosamine</name>
        <dbReference type="ChEBI" id="CHEBI:57705"/>
    </ligand>
</feature>
<feature type="binding site" evidence="1">
    <location>
        <position position="73"/>
    </location>
    <ligand>
        <name>UDP-N-acetyl-alpha-D-glucosamine</name>
        <dbReference type="ChEBI" id="CHEBI:57705"/>
    </ligand>
</feature>
<feature type="binding site" evidence="1">
    <location>
        <begin position="78"/>
        <end position="79"/>
    </location>
    <ligand>
        <name>UDP-N-acetyl-alpha-D-glucosamine</name>
        <dbReference type="ChEBI" id="CHEBI:57705"/>
    </ligand>
</feature>
<feature type="binding site" evidence="1">
    <location>
        <position position="103"/>
    </location>
    <ligand>
        <name>Mg(2+)</name>
        <dbReference type="ChEBI" id="CHEBI:18420"/>
    </ligand>
</feature>
<feature type="binding site" evidence="1">
    <location>
        <position position="140"/>
    </location>
    <ligand>
        <name>UDP-N-acetyl-alpha-D-glucosamine</name>
        <dbReference type="ChEBI" id="CHEBI:57705"/>
    </ligand>
</feature>
<feature type="binding site" evidence="1">
    <location>
        <position position="155"/>
    </location>
    <ligand>
        <name>UDP-N-acetyl-alpha-D-glucosamine</name>
        <dbReference type="ChEBI" id="CHEBI:57705"/>
    </ligand>
</feature>
<feature type="binding site" evidence="1">
    <location>
        <position position="170"/>
    </location>
    <ligand>
        <name>UDP-N-acetyl-alpha-D-glucosamine</name>
        <dbReference type="ChEBI" id="CHEBI:57705"/>
    </ligand>
</feature>
<feature type="binding site" evidence="1">
    <location>
        <position position="227"/>
    </location>
    <ligand>
        <name>Mg(2+)</name>
        <dbReference type="ChEBI" id="CHEBI:18420"/>
    </ligand>
</feature>
<feature type="binding site" evidence="1">
    <location>
        <position position="227"/>
    </location>
    <ligand>
        <name>UDP-N-acetyl-alpha-D-glucosamine</name>
        <dbReference type="ChEBI" id="CHEBI:57705"/>
    </ligand>
</feature>
<feature type="binding site" evidence="1">
    <location>
        <position position="332"/>
    </location>
    <ligand>
        <name>UDP-N-acetyl-alpha-D-glucosamine</name>
        <dbReference type="ChEBI" id="CHEBI:57705"/>
    </ligand>
</feature>
<feature type="binding site" evidence="1">
    <location>
        <position position="350"/>
    </location>
    <ligand>
        <name>UDP-N-acetyl-alpha-D-glucosamine</name>
        <dbReference type="ChEBI" id="CHEBI:57705"/>
    </ligand>
</feature>
<feature type="binding site" evidence="1">
    <location>
        <position position="365"/>
    </location>
    <ligand>
        <name>UDP-N-acetyl-alpha-D-glucosamine</name>
        <dbReference type="ChEBI" id="CHEBI:57705"/>
    </ligand>
</feature>
<feature type="binding site" evidence="1">
    <location>
        <position position="376"/>
    </location>
    <ligand>
        <name>UDP-N-acetyl-alpha-D-glucosamine</name>
        <dbReference type="ChEBI" id="CHEBI:57705"/>
    </ligand>
</feature>
<feature type="binding site" evidence="1">
    <location>
        <begin position="385"/>
        <end position="386"/>
    </location>
    <ligand>
        <name>acetyl-CoA</name>
        <dbReference type="ChEBI" id="CHEBI:57288"/>
    </ligand>
</feature>
<feature type="binding site" evidence="1">
    <location>
        <position position="422"/>
    </location>
    <ligand>
        <name>acetyl-CoA</name>
        <dbReference type="ChEBI" id="CHEBI:57288"/>
    </ligand>
</feature>
<feature type="binding site" evidence="1">
    <location>
        <position position="439"/>
    </location>
    <ligand>
        <name>acetyl-CoA</name>
        <dbReference type="ChEBI" id="CHEBI:57288"/>
    </ligand>
</feature>
<protein>
    <recommendedName>
        <fullName evidence="1">Bifunctional protein GlmU</fullName>
    </recommendedName>
    <domain>
        <recommendedName>
            <fullName evidence="1">UDP-N-acetylglucosamine pyrophosphorylase</fullName>
            <ecNumber evidence="1">2.7.7.23</ecNumber>
        </recommendedName>
        <alternativeName>
            <fullName evidence="1">N-acetylglucosamine-1-phosphate uridyltransferase</fullName>
        </alternativeName>
    </domain>
    <domain>
        <recommendedName>
            <fullName evidence="1">Glucosamine-1-phosphate N-acetyltransferase</fullName>
            <ecNumber evidence="1">2.3.1.157</ecNumber>
        </recommendedName>
    </domain>
</protein>
<gene>
    <name evidence="1" type="primary">glmU</name>
    <name type="ordered locus">CLI_3765</name>
</gene>